<sequence length="374" mass="42137">MENNKKNNQKQNSIDETEFPNSKVLLVSVKRTRRFLERTARELLAGGTRYIILSGLGDALPLCVQLQASLQSKNAATVVKIETSYSYFNTNYSYTPGLKIYMEKHPEFKGSRISPGYVSFCEKPDKFTPIFDETPNEYICSVNAGDNNLHVGGEGINAAFSELLSAHGHEVDKYESLFKELLSKAVKENSEKADDEVKSVLYESVEKKYPDVKLALCRVRNSLKKGSDNTTGSVFIVTFKKKFPHKKEKNMGMVYVVGPKGKNFNSVEDFLDAVHETAENLMTALCDYNGLVKREEIKHVRMNTCRICLFSGHAFKHSNASKLDVAKSILNGLAVGYRHGPSPRLNFAYDENVFKDAWIETTGLQVFNHNEKEQ</sequence>
<protein>
    <recommendedName>
        <fullName evidence="4">DNA/RNA-binding protein ALBA4</fullName>
        <shortName evidence="3">PyALBA4</shortName>
    </recommendedName>
</protein>
<feature type="chain" id="PRO_0000459509" description="DNA/RNA-binding protein ALBA4">
    <location>
        <begin position="1"/>
        <end position="374"/>
    </location>
</feature>
<gene>
    <name evidence="3" type="primary">ALBA4</name>
    <name evidence="5" type="ORF">PY07482</name>
</gene>
<proteinExistence type="evidence at protein level"/>
<name>ALBA4_PLAYO</name>
<evidence type="ECO:0000250" key="1">
    <source>
        <dbReference type="UniProtKB" id="A0A5K1K8Y8"/>
    </source>
</evidence>
<evidence type="ECO:0000269" key="2">
    <source>
    </source>
</evidence>
<evidence type="ECO:0000303" key="3">
    <source>
    </source>
</evidence>
<evidence type="ECO:0000305" key="4"/>
<evidence type="ECO:0000312" key="5">
    <source>
        <dbReference type="EMBL" id="EAA19945.1"/>
    </source>
</evidence>
<evidence type="ECO:0000312" key="6">
    <source>
        <dbReference type="Proteomes" id="UP000008553"/>
    </source>
</evidence>
<dbReference type="EMBL" id="AABL01002759">
    <property type="protein sequence ID" value="EAA19945.1"/>
    <property type="molecule type" value="Genomic_DNA"/>
</dbReference>
<dbReference type="SMR" id="Q7R7U6"/>
<dbReference type="FunCoup" id="Q7R7U6">
    <property type="interactions" value="18"/>
</dbReference>
<dbReference type="PaxDb" id="73239-Q7R7U6"/>
<dbReference type="EnsemblProtists" id="EAA19945">
    <property type="protein sequence ID" value="EAA19945"/>
    <property type="gene ID" value="EAA19945"/>
</dbReference>
<dbReference type="KEGG" id="pyo:PY17X_1366000"/>
<dbReference type="VEuPathDB" id="PlasmoDB:Py17XNL_001303491"/>
<dbReference type="InParanoid" id="Q7R7U6"/>
<dbReference type="Proteomes" id="UP000008553">
    <property type="component" value="Unassembled WGS sequence"/>
</dbReference>
<dbReference type="GO" id="GO:0005938">
    <property type="term" value="C:cell cortex"/>
    <property type="evidence" value="ECO:0007669"/>
    <property type="project" value="UniProtKB-SubCell"/>
</dbReference>
<dbReference type="GO" id="GO:0048471">
    <property type="term" value="C:perinuclear region of cytoplasm"/>
    <property type="evidence" value="ECO:0007669"/>
    <property type="project" value="UniProtKB-SubCell"/>
</dbReference>
<dbReference type="GO" id="GO:0003677">
    <property type="term" value="F:DNA binding"/>
    <property type="evidence" value="ECO:0007669"/>
    <property type="project" value="UniProtKB-KW"/>
</dbReference>
<dbReference type="GO" id="GO:0003723">
    <property type="term" value="F:RNA binding"/>
    <property type="evidence" value="ECO:0007669"/>
    <property type="project" value="UniProtKB-KW"/>
</dbReference>
<dbReference type="CDD" id="cd21101">
    <property type="entry name" value="MAF1-ALBA4_C"/>
    <property type="match status" value="1"/>
</dbReference>
<dbReference type="InterPro" id="IPR036882">
    <property type="entry name" value="Alba-like_dom_sf"/>
</dbReference>
<dbReference type="SUPFAM" id="SSF82704">
    <property type="entry name" value="AlbA-like"/>
    <property type="match status" value="1"/>
</dbReference>
<keyword id="KW-0963">Cytoplasm</keyword>
<keyword id="KW-0238">DNA-binding</keyword>
<keyword id="KW-1185">Reference proteome</keyword>
<keyword id="KW-0694">RNA-binding</keyword>
<organism evidence="6">
    <name type="scientific">Plasmodium yoelii yoelii</name>
    <dbReference type="NCBI Taxonomy" id="73239"/>
    <lineage>
        <taxon>Eukaryota</taxon>
        <taxon>Sar</taxon>
        <taxon>Alveolata</taxon>
        <taxon>Apicomplexa</taxon>
        <taxon>Aconoidasida</taxon>
        <taxon>Haemosporida</taxon>
        <taxon>Plasmodiidae</taxon>
        <taxon>Plasmodium</taxon>
        <taxon>Plasmodium (Vinckeia)</taxon>
    </lineage>
</organism>
<reference evidence="6" key="1">
    <citation type="journal article" date="2002" name="Nature">
        <title>Genome sequence and comparative analysis of the model rodent malaria parasite Plasmodium yoelii yoelii.</title>
        <authorList>
            <person name="Carlton J.M."/>
            <person name="Angiuoli S.V."/>
            <person name="Suh B.B."/>
            <person name="Kooij T.W."/>
            <person name="Pertea M."/>
            <person name="Silva J.C."/>
            <person name="Ermolaeva M.D."/>
            <person name="Allen J.E."/>
            <person name="Selengut J.D."/>
            <person name="Koo H.L."/>
            <person name="Peterson J.D."/>
            <person name="Pop M."/>
            <person name="Kosack D.S."/>
            <person name="Shumway M.F."/>
            <person name="Bidwell S.L."/>
            <person name="Shallom S.J."/>
            <person name="van Aken S.E."/>
            <person name="Riedmuller S.B."/>
            <person name="Feldblyum T.V."/>
            <person name="Cho J.K."/>
            <person name="Quackenbush J."/>
            <person name="Sedegah M."/>
            <person name="Shoaibi A."/>
            <person name="Cummings L.M."/>
            <person name="Florens L."/>
            <person name="Yates J.R. III"/>
            <person name="Raine J.D."/>
            <person name="Sinden R.E."/>
            <person name="Harris M.A."/>
            <person name="Cunningham D.A."/>
            <person name="Preiser P.R."/>
            <person name="Bergman L.W."/>
            <person name="Vaidya A.B."/>
            <person name="van Lin L.H."/>
            <person name="Janse C.J."/>
            <person name="Waters A.P."/>
            <person name="Smith H.O."/>
            <person name="White O.R."/>
            <person name="Salzberg S.L."/>
            <person name="Venter J.C."/>
            <person name="Fraser C.M."/>
            <person name="Hoffman S.L."/>
            <person name="Gardner M.J."/>
            <person name="Carucci D.J."/>
        </authorList>
    </citation>
    <scope>NUCLEOTIDE SEQUENCE [LARGE SCALE GENOMIC DNA]</scope>
    <source>
        <strain evidence="6">17XNL</strain>
    </source>
</reference>
<reference evidence="4" key="2">
    <citation type="journal article" date="2017" name="Mol. Microbiol.">
        <title>ALBA4 modulates its stage-specific interactions and specific mRNA fates during Plasmodium yoelii growth and transmission.</title>
        <authorList>
            <person name="Munoz E.E."/>
            <person name="Hart K.J."/>
            <person name="Walker M.P."/>
            <person name="Kennedy M.F."/>
            <person name="Shipley M.M."/>
            <person name="Lindner S.E."/>
        </authorList>
    </citation>
    <scope>FUNCTION</scope>
    <scope>SUBCELLULAR LOCATION</scope>
    <scope>DEVELOPMENTAL STAGE</scope>
    <scope>DISRUPTION PHENOTYPE</scope>
    <source>
        <strain evidence="3">17XNL</strain>
    </source>
</reference>
<accession>Q7R7U6</accession>
<comment type="function">
    <text evidence="1 2">Possesses DNA- and RNA-binding activities (By similarity). Binds to DNA with relaxed sequence specificity (By similarity). May associate with the subtelomeric TARE6 repeats (By similarity). Regulates the abundance of transcript sub-populations in a stage-specific manner (PubMed:28787542). Regulates activation of male gametocytes (PubMed:28787542). Participates in the coordination of sporozoite development in the oocyst (PubMed:28787542).</text>
</comment>
<comment type="subcellular location">
    <subcellularLocation>
        <location evidence="2">Cytoplasm</location>
    </subcellularLocation>
    <subcellularLocation>
        <location evidence="2">Cytoplasm</location>
        <location evidence="2">Cell cortex</location>
    </subcellularLocation>
    <subcellularLocation>
        <location evidence="2">Cytoplasm</location>
        <location evidence="2">Perinuclear region</location>
    </subcellularLocation>
    <text evidence="2">Protein shows exclusively nuclear-adjacent localization in the ring stage, appears in cytoplasmic punctate foci in schizonts, with an intermediate expression pattern and some protein accumulation along the plasma membrane in trophozoites. In male and female gametocytes expression is cytoplasmic and diffuse. In mosquito stages, both oocyst- and salivary gland sporozoites exhibit punctate cytoplasmic expression. In liver stages, cytoplasmic localization pattern shifts from largely diffuse in mid-liver stage to increasingly smaller puncta during late and very late liver stage.</text>
</comment>
<comment type="developmental stage">
    <text evidence="2">Expressed throughout asexual and sexual blood stages, in mosquito and liver stage parasites and is found in multiple subcellular locations (at protein level).</text>
</comment>
<comment type="disruption phenotype">
    <text evidence="2">In sexual stage gametocytes, genetic disruption causes a significant increase in the number of activated male gametes with no differences in total gametocytemia, sex ratio and mature-immature gametocyte ratio (PubMed:28787542). Typical coordinated arrival of the sporozoites to the salivary gland from the midgut is affected (PubMed:28787542). No significant differences in the prevalence of mosquito infection, oocyst numbers and total number of sporozoites per infected mosquito (PubMed:28787542). No significant growth defects in asexual blood stages (PubMed:28787542).</text>
</comment>
<comment type="similarity">
    <text evidence="4">Belongs to the histone-like Alba family.</text>
</comment>